<keyword id="KW-0240">DNA-directed RNA polymerase</keyword>
<keyword id="KW-0548">Nucleotidyltransferase</keyword>
<keyword id="KW-1185">Reference proteome</keyword>
<keyword id="KW-0804">Transcription</keyword>
<keyword id="KW-0808">Transferase</keyword>
<organism>
    <name type="scientific">Leptospira interrogans serogroup Icterohaemorrhagiae serovar Lai (strain 56601)</name>
    <dbReference type="NCBI Taxonomy" id="189518"/>
    <lineage>
        <taxon>Bacteria</taxon>
        <taxon>Pseudomonadati</taxon>
        <taxon>Spirochaetota</taxon>
        <taxon>Spirochaetia</taxon>
        <taxon>Leptospirales</taxon>
        <taxon>Leptospiraceae</taxon>
        <taxon>Leptospira</taxon>
    </lineage>
</organism>
<sequence length="325" mass="36687">MSLKSLLKGFKRPKKIEFNTEANTPNYGKFVAEPFERGFATTIGNSLRRTLMSSIEGAAISAIRIEGVNHEFSFIEGVAEDVTRIILNLKQVRIKYEPEEKDQSKIIHLELKGAGYFRAGDLAVDSSIEIMNPDLHIATLNEDANLVMDLEIQRGRGYVPAEEKKKDIEVLGTIPVDSIFSPVQKVVFEVSETRVAQRSDYEKLTLEVWTDGSVSPDDAVAQAAKILKEHLTVFINFEEELEEEDDELDEADEKLKASLSKHVEELELSVRSLNVLRSLEIDFIGDLVKRSEEEMSKSKHYSDQCLQELKVKLSTLGLSFGMRDF</sequence>
<protein>
    <recommendedName>
        <fullName evidence="1">DNA-directed RNA polymerase subunit alpha</fullName>
        <shortName evidence="1">RNAP subunit alpha</shortName>
        <ecNumber evidence="1">2.7.7.6</ecNumber>
    </recommendedName>
    <alternativeName>
        <fullName evidence="1">RNA polymerase subunit alpha</fullName>
    </alternativeName>
    <alternativeName>
        <fullName evidence="1">Transcriptase subunit alpha</fullName>
    </alternativeName>
</protein>
<evidence type="ECO:0000255" key="1">
    <source>
        <dbReference type="HAMAP-Rule" id="MF_00059"/>
    </source>
</evidence>
<evidence type="ECO:0000305" key="2"/>
<accession>Q9XD09</accession>
<name>RPOA_LEPIN</name>
<feature type="chain" id="PRO_0000175327" description="DNA-directed RNA polymerase subunit alpha">
    <location>
        <begin position="1"/>
        <end position="325"/>
    </location>
</feature>
<feature type="region of interest" description="Alpha N-terminal domain (alpha-NTD)" evidence="1">
    <location>
        <begin position="1"/>
        <end position="238"/>
    </location>
</feature>
<feature type="region of interest" description="Alpha C-terminal domain (alpha-CTD)" evidence="1">
    <location>
        <begin position="254"/>
        <end position="325"/>
    </location>
</feature>
<feature type="sequence conflict" description="In Ref. 1; AAD40610." evidence="2" ref="1">
    <original>V</original>
    <variation>A</variation>
    <location>
        <position position="270"/>
    </location>
</feature>
<gene>
    <name evidence="1" type="primary">rpoA</name>
    <name type="ordered locus">LA_0765</name>
</gene>
<dbReference type="EC" id="2.7.7.6" evidence="1"/>
<dbReference type="EMBL" id="AF115283">
    <property type="protein sequence ID" value="AAD40610.1"/>
    <property type="molecule type" value="Genomic_DNA"/>
</dbReference>
<dbReference type="EMBL" id="AE010300">
    <property type="protein sequence ID" value="AAN47964.1"/>
    <property type="molecule type" value="Genomic_DNA"/>
</dbReference>
<dbReference type="RefSeq" id="NP_710946.1">
    <property type="nucleotide sequence ID" value="NC_004342.2"/>
</dbReference>
<dbReference type="RefSeq" id="WP_000054108.1">
    <property type="nucleotide sequence ID" value="NC_004342.2"/>
</dbReference>
<dbReference type="SMR" id="Q9XD09"/>
<dbReference type="FunCoup" id="Q9XD09">
    <property type="interactions" value="453"/>
</dbReference>
<dbReference type="STRING" id="189518.LA_0765"/>
<dbReference type="PaxDb" id="189518-LA_0765"/>
<dbReference type="EnsemblBacteria" id="AAN47964">
    <property type="protein sequence ID" value="AAN47964"/>
    <property type="gene ID" value="LA_0765"/>
</dbReference>
<dbReference type="KEGG" id="lil:LA_0765"/>
<dbReference type="PATRIC" id="fig|189518.3.peg.772"/>
<dbReference type="HOGENOM" id="CLU_053084_0_1_12"/>
<dbReference type="InParanoid" id="Q9XD09"/>
<dbReference type="OrthoDB" id="9805706at2"/>
<dbReference type="Proteomes" id="UP000001408">
    <property type="component" value="Chromosome I"/>
</dbReference>
<dbReference type="GO" id="GO:0005737">
    <property type="term" value="C:cytoplasm"/>
    <property type="evidence" value="ECO:0000318"/>
    <property type="project" value="GO_Central"/>
</dbReference>
<dbReference type="GO" id="GO:0000428">
    <property type="term" value="C:DNA-directed RNA polymerase complex"/>
    <property type="evidence" value="ECO:0007669"/>
    <property type="project" value="UniProtKB-KW"/>
</dbReference>
<dbReference type="GO" id="GO:0003677">
    <property type="term" value="F:DNA binding"/>
    <property type="evidence" value="ECO:0007669"/>
    <property type="project" value="UniProtKB-UniRule"/>
</dbReference>
<dbReference type="GO" id="GO:0003899">
    <property type="term" value="F:DNA-directed RNA polymerase activity"/>
    <property type="evidence" value="ECO:0007669"/>
    <property type="project" value="UniProtKB-UniRule"/>
</dbReference>
<dbReference type="GO" id="GO:0046983">
    <property type="term" value="F:protein dimerization activity"/>
    <property type="evidence" value="ECO:0007669"/>
    <property type="project" value="InterPro"/>
</dbReference>
<dbReference type="GO" id="GO:0006351">
    <property type="term" value="P:DNA-templated transcription"/>
    <property type="evidence" value="ECO:0007669"/>
    <property type="project" value="UniProtKB-UniRule"/>
</dbReference>
<dbReference type="CDD" id="cd06928">
    <property type="entry name" value="RNAP_alpha_NTD"/>
    <property type="match status" value="1"/>
</dbReference>
<dbReference type="FunFam" id="1.10.150.20:FF:000047">
    <property type="entry name" value="DNA-directed RNA polymerase subunit alpha"/>
    <property type="match status" value="1"/>
</dbReference>
<dbReference type="FunFam" id="2.170.120.12:FF:000001">
    <property type="entry name" value="DNA-directed RNA polymerase subunit alpha"/>
    <property type="match status" value="1"/>
</dbReference>
<dbReference type="Gene3D" id="1.10.150.20">
    <property type="entry name" value="5' to 3' exonuclease, C-terminal subdomain"/>
    <property type="match status" value="1"/>
</dbReference>
<dbReference type="Gene3D" id="2.170.120.12">
    <property type="entry name" value="DNA-directed RNA polymerase, insert domain"/>
    <property type="match status" value="1"/>
</dbReference>
<dbReference type="Gene3D" id="3.30.1360.10">
    <property type="entry name" value="RNA polymerase, RBP11-like subunit"/>
    <property type="match status" value="1"/>
</dbReference>
<dbReference type="HAMAP" id="MF_00059">
    <property type="entry name" value="RNApol_bact_RpoA"/>
    <property type="match status" value="1"/>
</dbReference>
<dbReference type="InterPro" id="IPR011262">
    <property type="entry name" value="DNA-dir_RNA_pol_insert"/>
</dbReference>
<dbReference type="InterPro" id="IPR011263">
    <property type="entry name" value="DNA-dir_RNA_pol_RpoA/D/Rpb3"/>
</dbReference>
<dbReference type="InterPro" id="IPR011773">
    <property type="entry name" value="DNA-dir_RpoA"/>
</dbReference>
<dbReference type="InterPro" id="IPR036603">
    <property type="entry name" value="RBP11-like"/>
</dbReference>
<dbReference type="InterPro" id="IPR011260">
    <property type="entry name" value="RNAP_asu_C"/>
</dbReference>
<dbReference type="InterPro" id="IPR036643">
    <property type="entry name" value="RNApol_insert_sf"/>
</dbReference>
<dbReference type="NCBIfam" id="NF003513">
    <property type="entry name" value="PRK05182.1-2"/>
    <property type="match status" value="1"/>
</dbReference>
<dbReference type="NCBIfam" id="NF003519">
    <property type="entry name" value="PRK05182.2-5"/>
    <property type="match status" value="1"/>
</dbReference>
<dbReference type="NCBIfam" id="TIGR02027">
    <property type="entry name" value="rpoA"/>
    <property type="match status" value="1"/>
</dbReference>
<dbReference type="Pfam" id="PF01000">
    <property type="entry name" value="RNA_pol_A_bac"/>
    <property type="match status" value="1"/>
</dbReference>
<dbReference type="Pfam" id="PF03118">
    <property type="entry name" value="RNA_pol_A_CTD"/>
    <property type="match status" value="1"/>
</dbReference>
<dbReference type="Pfam" id="PF01193">
    <property type="entry name" value="RNA_pol_L"/>
    <property type="match status" value="1"/>
</dbReference>
<dbReference type="SMART" id="SM00662">
    <property type="entry name" value="RPOLD"/>
    <property type="match status" value="1"/>
</dbReference>
<dbReference type="SUPFAM" id="SSF47789">
    <property type="entry name" value="C-terminal domain of RNA polymerase alpha subunit"/>
    <property type="match status" value="1"/>
</dbReference>
<dbReference type="SUPFAM" id="SSF56553">
    <property type="entry name" value="Insert subdomain of RNA polymerase alpha subunit"/>
    <property type="match status" value="1"/>
</dbReference>
<dbReference type="SUPFAM" id="SSF55257">
    <property type="entry name" value="RBP11-like subunits of RNA polymerase"/>
    <property type="match status" value="1"/>
</dbReference>
<comment type="function">
    <text evidence="1">DNA-dependent RNA polymerase catalyzes the transcription of DNA into RNA using the four ribonucleoside triphosphates as substrates.</text>
</comment>
<comment type="catalytic activity">
    <reaction evidence="1">
        <text>RNA(n) + a ribonucleoside 5'-triphosphate = RNA(n+1) + diphosphate</text>
        <dbReference type="Rhea" id="RHEA:21248"/>
        <dbReference type="Rhea" id="RHEA-COMP:14527"/>
        <dbReference type="Rhea" id="RHEA-COMP:17342"/>
        <dbReference type="ChEBI" id="CHEBI:33019"/>
        <dbReference type="ChEBI" id="CHEBI:61557"/>
        <dbReference type="ChEBI" id="CHEBI:140395"/>
        <dbReference type="EC" id="2.7.7.6"/>
    </reaction>
</comment>
<comment type="subunit">
    <text evidence="1">Homodimer. The RNAP catalytic core consists of 2 alpha, 1 beta, 1 beta' and 1 omega subunit. When a sigma factor is associated with the core the holoenzyme is formed, which can initiate transcription.</text>
</comment>
<comment type="domain">
    <text evidence="1">The N-terminal domain is essential for RNAP assembly and basal transcription, whereas the C-terminal domain is involved in interaction with transcriptional regulators and with upstream promoter elements.</text>
</comment>
<comment type="similarity">
    <text evidence="1">Belongs to the RNA polymerase alpha chain family.</text>
</comment>
<reference key="1">
    <citation type="submission" date="1998-12" db="EMBL/GenBank/DDBJ databases">
        <title>Sequence analysis of a large ribosomal protein gene operon from Leptospira interrogans.</title>
        <authorList>
            <person name="Zuerner R.L."/>
            <person name="Harskeer R.A."/>
            <person name="van de Kemp H."/>
            <person name="Bal A.E."/>
        </authorList>
    </citation>
    <scope>NUCLEOTIDE SEQUENCE [GENOMIC DNA]</scope>
    <source>
        <strain>Lai / Serogroup Icterohaemorrhagiae / Serovar lai</strain>
    </source>
</reference>
<reference key="2">
    <citation type="journal article" date="2003" name="Nature">
        <title>Unique physiological and pathogenic features of Leptospira interrogans revealed by whole-genome sequencing.</title>
        <authorList>
            <person name="Ren S.-X."/>
            <person name="Fu G."/>
            <person name="Jiang X.-G."/>
            <person name="Zeng R."/>
            <person name="Miao Y.-G."/>
            <person name="Xu H."/>
            <person name="Zhang Y.-X."/>
            <person name="Xiong H."/>
            <person name="Lu G."/>
            <person name="Lu L.-F."/>
            <person name="Jiang H.-Q."/>
            <person name="Jia J."/>
            <person name="Tu Y.-F."/>
            <person name="Jiang J.-X."/>
            <person name="Gu W.-Y."/>
            <person name="Zhang Y.-Q."/>
            <person name="Cai Z."/>
            <person name="Sheng H.-H."/>
            <person name="Yin H.-F."/>
            <person name="Zhang Y."/>
            <person name="Zhu G.-F."/>
            <person name="Wan M."/>
            <person name="Huang H.-L."/>
            <person name="Qian Z."/>
            <person name="Wang S.-Y."/>
            <person name="Ma W."/>
            <person name="Yao Z.-J."/>
            <person name="Shen Y."/>
            <person name="Qiang B.-Q."/>
            <person name="Xia Q.-C."/>
            <person name="Guo X.-K."/>
            <person name="Danchin A."/>
            <person name="Saint Girons I."/>
            <person name="Somerville R.L."/>
            <person name="Wen Y.-M."/>
            <person name="Shi M.-H."/>
            <person name="Chen Z."/>
            <person name="Xu J.-G."/>
            <person name="Zhao G.-P."/>
        </authorList>
    </citation>
    <scope>NUCLEOTIDE SEQUENCE [LARGE SCALE GENOMIC DNA]</scope>
    <source>
        <strain>56601</strain>
    </source>
</reference>
<proteinExistence type="inferred from homology"/>